<feature type="signal peptide" evidence="2">
    <location>
        <begin position="1"/>
        <end position="29"/>
    </location>
</feature>
<feature type="chain" id="PRO_0000045223" description="Gamma-hemolysin component C">
    <location>
        <begin position="30"/>
        <end position="315"/>
    </location>
</feature>
<sequence length="315" mass="35642">MLKNKILATTLSVSLLAPLANPLLENAKAANDTEDIGKGNDVEIIKRTEDKTSNKWGVTQNIQFDFVKDKKYNKDALILKMQGFISSRTTYYNYKNTNHIKSMRWPFQYNIGLKTNDKYVSLINYLPKNKIESTNVSQTLGYNIGGNFQSAPSLGGNGSFNYSKSISYTQQNYVSEVEQQNSKSVLWGVKANSFATESGQKSAFDSDLFVGYKPHSKDPRDYFVPDSELPPLVQSGFNPSFIATVSHEKGSSDTSEFEITYGRNMDVTHAIKRSTHYGNSYLDGHRVHNAFKNRNYTVKYEVNWKTHEIKVKGQN</sequence>
<gene>
    <name type="primary">hlgC</name>
    <name type="ordered locus">SAR2510</name>
</gene>
<dbReference type="EMBL" id="BX571856">
    <property type="protein sequence ID" value="CAG41490.1"/>
    <property type="molecule type" value="Genomic_DNA"/>
</dbReference>
<dbReference type="RefSeq" id="WP_000916697.1">
    <property type="nucleotide sequence ID" value="NC_002952.2"/>
</dbReference>
<dbReference type="SMR" id="Q6GE13"/>
<dbReference type="KEGG" id="sar:SAR2510"/>
<dbReference type="HOGENOM" id="CLU_075311_0_0_9"/>
<dbReference type="Proteomes" id="UP000000596">
    <property type="component" value="Chromosome"/>
</dbReference>
<dbReference type="GO" id="GO:0005576">
    <property type="term" value="C:extracellular region"/>
    <property type="evidence" value="ECO:0007669"/>
    <property type="project" value="InterPro"/>
</dbReference>
<dbReference type="GO" id="GO:0090729">
    <property type="term" value="F:toxin activity"/>
    <property type="evidence" value="ECO:0007669"/>
    <property type="project" value="UniProtKB-KW"/>
</dbReference>
<dbReference type="GO" id="GO:0051715">
    <property type="term" value="P:cytolysis in another organism"/>
    <property type="evidence" value="ECO:0007669"/>
    <property type="project" value="InterPro"/>
</dbReference>
<dbReference type="Gene3D" id="2.70.240.10">
    <property type="entry name" value="Leukocidin/porin MspA"/>
    <property type="match status" value="1"/>
</dbReference>
<dbReference type="InterPro" id="IPR003963">
    <property type="entry name" value="Bi-component_toxin_staph"/>
</dbReference>
<dbReference type="InterPro" id="IPR016183">
    <property type="entry name" value="Leukocidin/Hemolysin_toxin"/>
</dbReference>
<dbReference type="InterPro" id="IPR036435">
    <property type="entry name" value="Leukocidin/porin_MspA_sf"/>
</dbReference>
<dbReference type="NCBIfam" id="TIGR01002">
    <property type="entry name" value="hlyII"/>
    <property type="match status" value="1"/>
</dbReference>
<dbReference type="Pfam" id="PF07968">
    <property type="entry name" value="Leukocidin"/>
    <property type="match status" value="1"/>
</dbReference>
<dbReference type="PRINTS" id="PR01468">
    <property type="entry name" value="BICOMPNTOXIN"/>
</dbReference>
<dbReference type="SUPFAM" id="SSF56959">
    <property type="entry name" value="Leukocidin-like"/>
    <property type="match status" value="1"/>
</dbReference>
<keyword id="KW-0204">Cytolysis</keyword>
<keyword id="KW-0354">Hemolysis</keyword>
<keyword id="KW-0732">Signal</keyword>
<keyword id="KW-0800">Toxin</keyword>
<keyword id="KW-0843">Virulence</keyword>
<protein>
    <recommendedName>
        <fullName>Gamma-hemolysin component C</fullName>
    </recommendedName>
</protein>
<name>HLGC_STAAR</name>
<proteinExistence type="inferred from homology"/>
<comment type="function">
    <text evidence="1">Toxin that seems to act by forming pores in the membrane of the cell. Has a hemolytic and a leucotoxic activity (By similarity).</text>
</comment>
<comment type="subunit">
    <text evidence="1">Toxicity requires sequential binding and synergistic association of a class S and a class F component which form heterooligomeric complexes. HlgC (class S) associates with HlgB (class F) thus forming an CB toxin (By similarity).</text>
</comment>
<comment type="similarity">
    <text evidence="3">Belongs to the aerolysin family.</text>
</comment>
<reference key="1">
    <citation type="journal article" date="2004" name="Proc. Natl. Acad. Sci. U.S.A.">
        <title>Complete genomes of two clinical Staphylococcus aureus strains: evidence for the rapid evolution of virulence and drug resistance.</title>
        <authorList>
            <person name="Holden M.T.G."/>
            <person name="Feil E.J."/>
            <person name="Lindsay J.A."/>
            <person name="Peacock S.J."/>
            <person name="Day N.P.J."/>
            <person name="Enright M.C."/>
            <person name="Foster T.J."/>
            <person name="Moore C.E."/>
            <person name="Hurst L."/>
            <person name="Atkin R."/>
            <person name="Barron A."/>
            <person name="Bason N."/>
            <person name="Bentley S.D."/>
            <person name="Chillingworth C."/>
            <person name="Chillingworth T."/>
            <person name="Churcher C."/>
            <person name="Clark L."/>
            <person name="Corton C."/>
            <person name="Cronin A."/>
            <person name="Doggett J."/>
            <person name="Dowd L."/>
            <person name="Feltwell T."/>
            <person name="Hance Z."/>
            <person name="Harris B."/>
            <person name="Hauser H."/>
            <person name="Holroyd S."/>
            <person name="Jagels K."/>
            <person name="James K.D."/>
            <person name="Lennard N."/>
            <person name="Line A."/>
            <person name="Mayes R."/>
            <person name="Moule S."/>
            <person name="Mungall K."/>
            <person name="Ormond D."/>
            <person name="Quail M.A."/>
            <person name="Rabbinowitsch E."/>
            <person name="Rutherford K.M."/>
            <person name="Sanders M."/>
            <person name="Sharp S."/>
            <person name="Simmonds M."/>
            <person name="Stevens K."/>
            <person name="Whitehead S."/>
            <person name="Barrell B.G."/>
            <person name="Spratt B.G."/>
            <person name="Parkhill J."/>
        </authorList>
    </citation>
    <scope>NUCLEOTIDE SEQUENCE [LARGE SCALE GENOMIC DNA]</scope>
    <source>
        <strain>MRSA252</strain>
    </source>
</reference>
<organism>
    <name type="scientific">Staphylococcus aureus (strain MRSA252)</name>
    <dbReference type="NCBI Taxonomy" id="282458"/>
    <lineage>
        <taxon>Bacteria</taxon>
        <taxon>Bacillati</taxon>
        <taxon>Bacillota</taxon>
        <taxon>Bacilli</taxon>
        <taxon>Bacillales</taxon>
        <taxon>Staphylococcaceae</taxon>
        <taxon>Staphylococcus</taxon>
    </lineage>
</organism>
<evidence type="ECO:0000250" key="1"/>
<evidence type="ECO:0000255" key="2"/>
<evidence type="ECO:0000305" key="3"/>
<accession>Q6GE13</accession>